<comment type="similarity">
    <text evidence="2">Belongs to the LOB domain-containing protein family.</text>
</comment>
<protein>
    <recommendedName>
        <fullName>LOB domain-containing protein 24</fullName>
    </recommendedName>
    <alternativeName>
        <fullName>ASYMMETRIC LEAVES 2-like protein 13</fullName>
        <shortName>AS2-like protein 13</shortName>
    </alternativeName>
</protein>
<evidence type="ECO:0000255" key="1">
    <source>
        <dbReference type="PROSITE-ProRule" id="PRU00291"/>
    </source>
</evidence>
<evidence type="ECO:0000305" key="2"/>
<gene>
    <name type="primary">LBD24</name>
    <name type="synonym">ASL13</name>
    <name type="ordered locus">At3g26660</name>
    <name type="ORF">MLJ15.5</name>
</gene>
<keyword id="KW-1185">Reference proteome</keyword>
<sequence length="121" mass="13684">MNPKRCAACKYLRRRCPKDCVFSPYFPPNDPQKFACVHRIYGAGNVSKMLQQLPDQTRAEAVESLCFEAKCRVDDPVYGCVGIIHLLKTQIQKTQNELAKTQAEIAVAQTKLSQTQNSDFM</sequence>
<dbReference type="EMBL" id="AB473846">
    <property type="protein sequence ID" value="BAH10557.1"/>
    <property type="molecule type" value="mRNA"/>
</dbReference>
<dbReference type="EMBL" id="X98130">
    <property type="status" value="NOT_ANNOTATED_CDS"/>
    <property type="molecule type" value="Genomic_DNA"/>
</dbReference>
<dbReference type="EMBL" id="AB026648">
    <property type="status" value="NOT_ANNOTATED_CDS"/>
    <property type="molecule type" value="Genomic_DNA"/>
</dbReference>
<dbReference type="EMBL" id="CP002686">
    <property type="protein sequence ID" value="AEE77192.1"/>
    <property type="molecule type" value="Genomic_DNA"/>
</dbReference>
<dbReference type="RefSeq" id="NP_189300.1">
    <property type="nucleotide sequence ID" value="NM_113577.4"/>
</dbReference>
<dbReference type="SMR" id="P59468"/>
<dbReference type="STRING" id="3702.P59468"/>
<dbReference type="PaxDb" id="3702-AT3G26660.1"/>
<dbReference type="EnsemblPlants" id="AT3G26660.1">
    <property type="protein sequence ID" value="AT3G26660.1"/>
    <property type="gene ID" value="AT3G26660"/>
</dbReference>
<dbReference type="GeneID" id="822278"/>
<dbReference type="Gramene" id="AT3G26660.1">
    <property type="protein sequence ID" value="AT3G26660.1"/>
    <property type="gene ID" value="AT3G26660"/>
</dbReference>
<dbReference type="KEGG" id="ath:AT3G26660"/>
<dbReference type="Araport" id="AT3G26660"/>
<dbReference type="TAIR" id="AT3G26660">
    <property type="gene designation" value="LBD24"/>
</dbReference>
<dbReference type="eggNOG" id="ENOG502S2P2">
    <property type="taxonomic scope" value="Eukaryota"/>
</dbReference>
<dbReference type="HOGENOM" id="CLU_058353_6_1_1"/>
<dbReference type="InParanoid" id="P59468"/>
<dbReference type="OMA" id="QTQITCH"/>
<dbReference type="PhylomeDB" id="P59468"/>
<dbReference type="PRO" id="PR:P59468"/>
<dbReference type="Proteomes" id="UP000006548">
    <property type="component" value="Chromosome 3"/>
</dbReference>
<dbReference type="ExpressionAtlas" id="P59468">
    <property type="expression patterns" value="baseline"/>
</dbReference>
<dbReference type="InterPro" id="IPR004883">
    <property type="entry name" value="LOB"/>
</dbReference>
<dbReference type="PANTHER" id="PTHR31301:SF120">
    <property type="entry name" value="LOB DOMAIN-CONTAINING PROTEIN 23-RELATED"/>
    <property type="match status" value="1"/>
</dbReference>
<dbReference type="PANTHER" id="PTHR31301">
    <property type="entry name" value="LOB DOMAIN-CONTAINING PROTEIN 4-RELATED"/>
    <property type="match status" value="1"/>
</dbReference>
<dbReference type="Pfam" id="PF03195">
    <property type="entry name" value="LOB"/>
    <property type="match status" value="1"/>
</dbReference>
<dbReference type="PROSITE" id="PS50891">
    <property type="entry name" value="LOB"/>
    <property type="match status" value="1"/>
</dbReference>
<feature type="chain" id="PRO_0000132275" description="LOB domain-containing protein 24">
    <location>
        <begin position="1"/>
        <end position="121"/>
    </location>
</feature>
<feature type="domain" description="LOB" evidence="1">
    <location>
        <begin position="4"/>
        <end position="105"/>
    </location>
</feature>
<accession>P59468</accession>
<accession>B7XG67</accession>
<proteinExistence type="evidence at transcript level"/>
<organism>
    <name type="scientific">Arabidopsis thaliana</name>
    <name type="common">Mouse-ear cress</name>
    <dbReference type="NCBI Taxonomy" id="3702"/>
    <lineage>
        <taxon>Eukaryota</taxon>
        <taxon>Viridiplantae</taxon>
        <taxon>Streptophyta</taxon>
        <taxon>Embryophyta</taxon>
        <taxon>Tracheophyta</taxon>
        <taxon>Spermatophyta</taxon>
        <taxon>Magnoliopsida</taxon>
        <taxon>eudicotyledons</taxon>
        <taxon>Gunneridae</taxon>
        <taxon>Pentapetalae</taxon>
        <taxon>rosids</taxon>
        <taxon>malvids</taxon>
        <taxon>Brassicales</taxon>
        <taxon>Brassicaceae</taxon>
        <taxon>Camelineae</taxon>
        <taxon>Arabidopsis</taxon>
    </lineage>
</organism>
<name>LBD24_ARATH</name>
<reference key="1">
    <citation type="journal article" date="2009" name="Plant J.">
        <title>Characterization of genes in the ASYMMETRIC LEAVES2/LATERAL ORGAN BOUNDARIES (AS2/LOB) family in Arabidopsis thaliana, and functional and molecular comparisons between AS2 and other family members.</title>
        <authorList>
            <person name="Matsumura Y."/>
            <person name="Iwakawa H."/>
            <person name="Machida Y."/>
            <person name="Machida C."/>
        </authorList>
    </citation>
    <scope>NUCLEOTIDE SEQUENCE [MRNA]</scope>
    <source>
        <strain>cv. Columbia</strain>
    </source>
</reference>
<reference key="2">
    <citation type="journal article" date="1996" name="Nucleic Acids Res.">
        <title>Sequence analysis of an 81 kb contig from Arabidopsis thaliana chromosome III.</title>
        <authorList>
            <person name="Quigley F."/>
            <person name="Dao P."/>
            <person name="Cottet A."/>
            <person name="Mache R."/>
        </authorList>
    </citation>
    <scope>NUCLEOTIDE SEQUENCE [GENOMIC DNA]</scope>
    <source>
        <strain>cv. Columbia</strain>
    </source>
</reference>
<reference key="3">
    <citation type="journal article" date="2000" name="DNA Res.">
        <title>Structural analysis of Arabidopsis thaliana chromosome 3. I. Sequence features of the regions of 4,504,864 bp covered by sixty P1 and TAC clones.</title>
        <authorList>
            <person name="Sato S."/>
            <person name="Nakamura Y."/>
            <person name="Kaneko T."/>
            <person name="Katoh T."/>
            <person name="Asamizu E."/>
            <person name="Tabata S."/>
        </authorList>
    </citation>
    <scope>NUCLEOTIDE SEQUENCE [LARGE SCALE GENOMIC DNA]</scope>
    <source>
        <strain>cv. Columbia</strain>
    </source>
</reference>
<reference key="4">
    <citation type="journal article" date="2017" name="Plant J.">
        <title>Araport11: a complete reannotation of the Arabidopsis thaliana reference genome.</title>
        <authorList>
            <person name="Cheng C.Y."/>
            <person name="Krishnakumar V."/>
            <person name="Chan A.P."/>
            <person name="Thibaud-Nissen F."/>
            <person name="Schobel S."/>
            <person name="Town C.D."/>
        </authorList>
    </citation>
    <scope>GENOME REANNOTATION</scope>
    <source>
        <strain>cv. Columbia</strain>
    </source>
</reference>
<reference key="5">
    <citation type="journal article" date="2002" name="Plant Physiol.">
        <title>The LATERAL ORGAN BOUNDARIES gene defines a novel, plant-specific gene family.</title>
        <authorList>
            <person name="Shuai B."/>
            <person name="Reynaga-Pena C.G."/>
            <person name="Springer P.S."/>
        </authorList>
    </citation>
    <scope>GENE FAMILY</scope>
    <scope>NOMENCLATURE</scope>
</reference>
<reference key="6">
    <citation type="journal article" date="2002" name="Plant Cell Physiol.">
        <title>The ASYMMETRIC LEAVES2 gene of Arabidopsis thaliana, required for formation of a symmetric flat leaf lamina, encodes a member of a novel family of proteins characterized by cysteine repeats and a leucine zipper.</title>
        <authorList>
            <person name="Iwakawa H."/>
            <person name="Ueno Y."/>
            <person name="Semiarti E."/>
            <person name="Onouchi H."/>
            <person name="Kojima S."/>
            <person name="Tsukaya H."/>
            <person name="Hasebe M."/>
            <person name="Soma T."/>
            <person name="Ikezaki M."/>
            <person name="Machida C."/>
            <person name="Machida Y."/>
        </authorList>
    </citation>
    <scope>GENE FAMILY</scope>
    <scope>NOMENCLATURE</scope>
</reference>